<organism>
    <name type="scientific">Homo sapiens</name>
    <name type="common">Human</name>
    <dbReference type="NCBI Taxonomy" id="9606"/>
    <lineage>
        <taxon>Eukaryota</taxon>
        <taxon>Metazoa</taxon>
        <taxon>Chordata</taxon>
        <taxon>Craniata</taxon>
        <taxon>Vertebrata</taxon>
        <taxon>Euteleostomi</taxon>
        <taxon>Mammalia</taxon>
        <taxon>Eutheria</taxon>
        <taxon>Euarchontoglires</taxon>
        <taxon>Primates</taxon>
        <taxon>Haplorrhini</taxon>
        <taxon>Catarrhini</taxon>
        <taxon>Hominidae</taxon>
        <taxon>Homo</taxon>
    </lineage>
</organism>
<evidence type="ECO:0000250" key="1">
    <source>
        <dbReference type="UniProtKB" id="Q9CYG7"/>
    </source>
</evidence>
<evidence type="ECO:0000256" key="2">
    <source>
        <dbReference type="SAM" id="MobiDB-lite"/>
    </source>
</evidence>
<evidence type="ECO:0000269" key="3">
    <source>
    </source>
</evidence>
<evidence type="ECO:0000269" key="4">
    <source>
    </source>
</evidence>
<evidence type="ECO:0000269" key="5">
    <source>
    </source>
</evidence>
<evidence type="ECO:0000269" key="6">
    <source>
    </source>
</evidence>
<evidence type="ECO:0000269" key="7">
    <source>
    </source>
</evidence>
<evidence type="ECO:0000305" key="8"/>
<evidence type="ECO:0007744" key="9">
    <source>
    </source>
</evidence>
<evidence type="ECO:0007744" key="10">
    <source>
    </source>
</evidence>
<evidence type="ECO:0007744" key="11">
    <source>
    </source>
</evidence>
<evidence type="ECO:0007744" key="12">
    <source>
    </source>
</evidence>
<evidence type="ECO:0007744" key="13">
    <source>
    </source>
</evidence>
<feature type="chain" id="PRO_0000106334" description="Mitochondrial import receptor subunit TOM34">
    <location>
        <begin position="1"/>
        <end position="309"/>
    </location>
</feature>
<feature type="repeat" description="TPR 1">
    <location>
        <begin position="9"/>
        <end position="42"/>
    </location>
</feature>
<feature type="repeat" description="TPR 2">
    <location>
        <begin position="51"/>
        <end position="84"/>
    </location>
</feature>
<feature type="repeat" description="TPR 3">
    <location>
        <begin position="86"/>
        <end position="118"/>
    </location>
</feature>
<feature type="repeat" description="TPR 4">
    <location>
        <begin position="193"/>
        <end position="226"/>
    </location>
</feature>
<feature type="repeat" description="TPR 5">
    <location>
        <begin position="227"/>
        <end position="260"/>
    </location>
</feature>
<feature type="repeat" description="TPR 6">
    <location>
        <begin position="262"/>
        <end position="294"/>
    </location>
</feature>
<feature type="region of interest" description="Disordered" evidence="2">
    <location>
        <begin position="161"/>
        <end position="189"/>
    </location>
</feature>
<feature type="compositionally biased region" description="Basic and acidic residues" evidence="2">
    <location>
        <begin position="164"/>
        <end position="178"/>
    </location>
</feature>
<feature type="modified residue" description="Phosphoserine" evidence="1">
    <location>
        <position position="8"/>
    </location>
</feature>
<feature type="modified residue" description="Phosphoserine" evidence="12">
    <location>
        <position position="160"/>
    </location>
</feature>
<feature type="modified residue" description="Phosphoserine" evidence="9 10 11 12">
    <location>
        <position position="186"/>
    </location>
</feature>
<feature type="cross-link" description="Glycyl lysine isopeptide (Lys-Gly) (interchain with G-Cter in SUMO2)" evidence="13">
    <location>
        <position position="197"/>
    </location>
</feature>
<feature type="sequence variant" id="VAR_059860" description="In dbSNP:rs6094061.">
    <original>R</original>
    <variation>K</variation>
    <location>
        <position position="293"/>
    </location>
</feature>
<feature type="sequence conflict" description="In Ref. 1; AAC64484." evidence="8" ref="1">
    <original>LKD</original>
    <variation>WKN</variation>
    <location>
        <begin position="62"/>
        <end position="64"/>
    </location>
</feature>
<feature type="sequence conflict" description="In Ref. 5; BAD96672." evidence="8" ref="5">
    <original>N</original>
    <variation>S</variation>
    <location>
        <position position="126"/>
    </location>
</feature>
<feature type="sequence conflict" description="In Ref. 1; AAC64484." evidence="8" ref="1">
    <original>I</original>
    <variation>F</variation>
    <location>
        <position position="147"/>
    </location>
</feature>
<feature type="sequence conflict" description="In Ref. 1; AAC64484." evidence="8" ref="1">
    <original>S</original>
    <variation>F</variation>
    <location>
        <position position="160"/>
    </location>
</feature>
<proteinExistence type="evidence at protein level"/>
<dbReference type="EMBL" id="U58970">
    <property type="protein sequence ID" value="AAC64484.1"/>
    <property type="molecule type" value="mRNA"/>
</dbReference>
<dbReference type="EMBL" id="AB085681">
    <property type="protein sequence ID" value="BAF32949.1"/>
    <property type="molecule type" value="mRNA"/>
</dbReference>
<dbReference type="EMBL" id="BT020008">
    <property type="protein sequence ID" value="AAV38811.1"/>
    <property type="molecule type" value="mRNA"/>
</dbReference>
<dbReference type="EMBL" id="BT020009">
    <property type="protein sequence ID" value="AAV38812.1"/>
    <property type="molecule type" value="mRNA"/>
</dbReference>
<dbReference type="EMBL" id="CR456765">
    <property type="protein sequence ID" value="CAG33046.1"/>
    <property type="molecule type" value="mRNA"/>
</dbReference>
<dbReference type="EMBL" id="AK222952">
    <property type="protein sequence ID" value="BAD96672.1"/>
    <property type="molecule type" value="mRNA"/>
</dbReference>
<dbReference type="EMBL" id="AL109839">
    <property type="status" value="NOT_ANNOTATED_CDS"/>
    <property type="molecule type" value="Genomic_DNA"/>
</dbReference>
<dbReference type="EMBL" id="CH471077">
    <property type="protein sequence ID" value="EAW75886.1"/>
    <property type="molecule type" value="Genomic_DNA"/>
</dbReference>
<dbReference type="EMBL" id="BC007423">
    <property type="protein sequence ID" value="AAH07423.1"/>
    <property type="molecule type" value="mRNA"/>
</dbReference>
<dbReference type="EMBL" id="BC001763">
    <property type="protein sequence ID" value="AAH01763.1"/>
    <property type="molecule type" value="mRNA"/>
</dbReference>
<dbReference type="EMBL" id="BC014907">
    <property type="protein sequence ID" value="AAH14907.1"/>
    <property type="molecule type" value="mRNA"/>
</dbReference>
<dbReference type="CCDS" id="CCDS13340.1"/>
<dbReference type="RefSeq" id="NP_006800.2">
    <property type="nucleotide sequence ID" value="NM_006809.4"/>
</dbReference>
<dbReference type="SMR" id="Q15785"/>
<dbReference type="BioGRID" id="116153">
    <property type="interactions" value="151"/>
</dbReference>
<dbReference type="FunCoup" id="Q15785">
    <property type="interactions" value="2526"/>
</dbReference>
<dbReference type="IntAct" id="Q15785">
    <property type="interactions" value="59"/>
</dbReference>
<dbReference type="MINT" id="Q15785"/>
<dbReference type="STRING" id="9606.ENSP00000361900"/>
<dbReference type="GlyGen" id="Q15785">
    <property type="glycosylation" value="1 site, 1 O-linked glycan (1 site)"/>
</dbReference>
<dbReference type="iPTMnet" id="Q15785"/>
<dbReference type="MetOSite" id="Q15785"/>
<dbReference type="PhosphoSitePlus" id="Q15785"/>
<dbReference type="SwissPalm" id="Q15785"/>
<dbReference type="BioMuta" id="TOMM34"/>
<dbReference type="DMDM" id="24212065"/>
<dbReference type="jPOST" id="Q15785"/>
<dbReference type="MassIVE" id="Q15785"/>
<dbReference type="PaxDb" id="9606-ENSP00000361900"/>
<dbReference type="PeptideAtlas" id="Q15785"/>
<dbReference type="ProteomicsDB" id="60760"/>
<dbReference type="Pumba" id="Q15785"/>
<dbReference type="Antibodypedia" id="12625">
    <property type="antibodies" value="336 antibodies from 27 providers"/>
</dbReference>
<dbReference type="DNASU" id="10953"/>
<dbReference type="Ensembl" id="ENST00000372813.4">
    <property type="protein sequence ID" value="ENSP00000361900.3"/>
    <property type="gene ID" value="ENSG00000025772.8"/>
</dbReference>
<dbReference type="GeneID" id="10953"/>
<dbReference type="KEGG" id="hsa:10953"/>
<dbReference type="MANE-Select" id="ENST00000372813.4">
    <property type="protein sequence ID" value="ENSP00000361900.3"/>
    <property type="RefSeq nucleotide sequence ID" value="NM_006809.5"/>
    <property type="RefSeq protein sequence ID" value="NP_006800.2"/>
</dbReference>
<dbReference type="UCSC" id="uc002xmy.4">
    <property type="organism name" value="human"/>
</dbReference>
<dbReference type="AGR" id="HGNC:15746"/>
<dbReference type="CTD" id="10953"/>
<dbReference type="DisGeNET" id="10953"/>
<dbReference type="GeneCards" id="TOMM34"/>
<dbReference type="HGNC" id="HGNC:15746">
    <property type="gene designation" value="TOMM34"/>
</dbReference>
<dbReference type="HPA" id="ENSG00000025772">
    <property type="expression patterns" value="Tissue enhanced (testis)"/>
</dbReference>
<dbReference type="MIM" id="616049">
    <property type="type" value="gene"/>
</dbReference>
<dbReference type="neXtProt" id="NX_Q15785"/>
<dbReference type="OpenTargets" id="ENSG00000025772"/>
<dbReference type="PharmGKB" id="PA38032"/>
<dbReference type="VEuPathDB" id="HostDB:ENSG00000025772"/>
<dbReference type="eggNOG" id="KOG1124">
    <property type="taxonomic scope" value="Eukaryota"/>
</dbReference>
<dbReference type="GeneTree" id="ENSGT00940000161058"/>
<dbReference type="HOGENOM" id="CLU_061396_0_0_1"/>
<dbReference type="InParanoid" id="Q15785"/>
<dbReference type="OMA" id="ECTTYTN"/>
<dbReference type="OrthoDB" id="245563at2759"/>
<dbReference type="PAN-GO" id="Q15785">
    <property type="GO annotations" value="4 GO annotations based on evolutionary models"/>
</dbReference>
<dbReference type="PhylomeDB" id="Q15785"/>
<dbReference type="TreeFam" id="TF106202"/>
<dbReference type="PathwayCommons" id="Q15785"/>
<dbReference type="SignaLink" id="Q15785"/>
<dbReference type="BioGRID-ORCS" id="10953">
    <property type="hits" value="9 hits in 1156 CRISPR screens"/>
</dbReference>
<dbReference type="CD-CODE" id="DEE660B4">
    <property type="entry name" value="Stress granule"/>
</dbReference>
<dbReference type="CD-CODE" id="FB4E32DD">
    <property type="entry name" value="Presynaptic clusters and postsynaptic densities"/>
</dbReference>
<dbReference type="ChiTaRS" id="TOMM34">
    <property type="organism name" value="human"/>
</dbReference>
<dbReference type="GeneWiki" id="TOMM34"/>
<dbReference type="GenomeRNAi" id="10953"/>
<dbReference type="Pharos" id="Q15785">
    <property type="development level" value="Tbio"/>
</dbReference>
<dbReference type="PRO" id="PR:Q15785"/>
<dbReference type="Proteomes" id="UP000005640">
    <property type="component" value="Chromosome 20"/>
</dbReference>
<dbReference type="RNAct" id="Q15785">
    <property type="molecule type" value="protein"/>
</dbReference>
<dbReference type="Bgee" id="ENSG00000025772">
    <property type="expression patterns" value="Expressed in right testis and 192 other cell types or tissues"/>
</dbReference>
<dbReference type="GO" id="GO:0005829">
    <property type="term" value="C:cytosol"/>
    <property type="evidence" value="ECO:0000314"/>
    <property type="project" value="HPA"/>
</dbReference>
<dbReference type="GO" id="GO:0043231">
    <property type="term" value="C:intracellular membrane-bounded organelle"/>
    <property type="evidence" value="ECO:0000314"/>
    <property type="project" value="HPA"/>
</dbReference>
<dbReference type="GO" id="GO:0016020">
    <property type="term" value="C:membrane"/>
    <property type="evidence" value="ECO:0007005"/>
    <property type="project" value="UniProtKB"/>
</dbReference>
<dbReference type="GO" id="GO:0005741">
    <property type="term" value="C:mitochondrial outer membrane"/>
    <property type="evidence" value="ECO:0000314"/>
    <property type="project" value="UniProtKB"/>
</dbReference>
<dbReference type="GO" id="GO:0005739">
    <property type="term" value="C:mitochondrion"/>
    <property type="evidence" value="ECO:0000314"/>
    <property type="project" value="HPA"/>
</dbReference>
<dbReference type="GO" id="GO:0005634">
    <property type="term" value="C:nucleus"/>
    <property type="evidence" value="ECO:0007005"/>
    <property type="project" value="UniProtKB"/>
</dbReference>
<dbReference type="GO" id="GO:0031072">
    <property type="term" value="F:heat shock protein binding"/>
    <property type="evidence" value="ECO:0000353"/>
    <property type="project" value="UniProtKB"/>
</dbReference>
<dbReference type="GO" id="GO:0006626">
    <property type="term" value="P:protein targeting to mitochondrion"/>
    <property type="evidence" value="ECO:0000315"/>
    <property type="project" value="UniProtKB"/>
</dbReference>
<dbReference type="FunFam" id="1.25.40.10:FF:000221">
    <property type="entry name" value="Mitochondrial import receptor subunit TOM34"/>
    <property type="match status" value="1"/>
</dbReference>
<dbReference type="FunFam" id="1.25.40.10:FF:000312">
    <property type="entry name" value="Mitochondrial import receptor subunit TOM34"/>
    <property type="match status" value="1"/>
</dbReference>
<dbReference type="Gene3D" id="1.25.40.10">
    <property type="entry name" value="Tetratricopeptide repeat domain"/>
    <property type="match status" value="2"/>
</dbReference>
<dbReference type="InterPro" id="IPR051982">
    <property type="entry name" value="CiliaryAsmbly_MitoImport"/>
</dbReference>
<dbReference type="InterPro" id="IPR011990">
    <property type="entry name" value="TPR-like_helical_dom_sf"/>
</dbReference>
<dbReference type="InterPro" id="IPR019734">
    <property type="entry name" value="TPR_rpt"/>
</dbReference>
<dbReference type="PANTHER" id="PTHR45984:SF2">
    <property type="entry name" value="MITOCHONDRIAL IMPORT RECEPTOR SUBUNIT TOM34"/>
    <property type="match status" value="1"/>
</dbReference>
<dbReference type="PANTHER" id="PTHR45984">
    <property type="entry name" value="RNA (RNA) POLYMERASE II ASSOCIATED PROTEIN HOMOLOG"/>
    <property type="match status" value="1"/>
</dbReference>
<dbReference type="Pfam" id="PF00515">
    <property type="entry name" value="TPR_1"/>
    <property type="match status" value="1"/>
</dbReference>
<dbReference type="SMART" id="SM00028">
    <property type="entry name" value="TPR"/>
    <property type="match status" value="6"/>
</dbReference>
<dbReference type="SUPFAM" id="SSF48452">
    <property type="entry name" value="TPR-like"/>
    <property type="match status" value="2"/>
</dbReference>
<dbReference type="PROSITE" id="PS50005">
    <property type="entry name" value="TPR"/>
    <property type="match status" value="5"/>
</dbReference>
<dbReference type="PROSITE" id="PS50293">
    <property type="entry name" value="TPR_REGION"/>
    <property type="match status" value="2"/>
</dbReference>
<keyword id="KW-0143">Chaperone</keyword>
<keyword id="KW-0963">Cytoplasm</keyword>
<keyword id="KW-1017">Isopeptide bond</keyword>
<keyword id="KW-0472">Membrane</keyword>
<keyword id="KW-0496">Mitochondrion</keyword>
<keyword id="KW-1000">Mitochondrion outer membrane</keyword>
<keyword id="KW-0597">Phosphoprotein</keyword>
<keyword id="KW-1267">Proteomics identification</keyword>
<keyword id="KW-1185">Reference proteome</keyword>
<keyword id="KW-0677">Repeat</keyword>
<keyword id="KW-0802">TPR repeat</keyword>
<keyword id="KW-0832">Ubl conjugation</keyword>
<accession>Q15785</accession>
<accession>Q53GH9</accession>
<accession>Q6IBN7</accession>
<accession>Q9NTZ3</accession>
<protein>
    <recommendedName>
        <fullName>Mitochondrial import receptor subunit TOM34</fullName>
        <shortName>hTom34</shortName>
    </recommendedName>
    <alternativeName>
        <fullName>Translocase of outer membrane 34 kDa subunit</fullName>
    </alternativeName>
</protein>
<comment type="function">
    <text evidence="3 4 6">Plays a role in the import of cytosolically synthesized preproteins into mitochondria. Binds the mature portion of precursor proteins. Interacts with cellular components, and possesses weak ATPase activity. May be a chaperone-like protein that helps to keep newly synthesized precursors in an unfolded import compatible state.</text>
</comment>
<comment type="subunit">
    <text evidence="5 7">Interacts with HSP90A, VCP, ATP6V1D, KIAA0665, AMPK, and DMAP1 through its TPR repeat.</text>
</comment>
<comment type="interaction">
    <interactant intactId="EBI-1054499">
        <id>Q15785</id>
    </interactant>
    <interactant intactId="EBI-717399">
        <id>Q9BSI4</id>
        <label>TINF2</label>
    </interactant>
    <organismsDiffer>false</organismsDiffer>
    <experiments>2</experiments>
</comment>
<comment type="subcellular location">
    <subcellularLocation>
        <location evidence="3">Cytoplasm</location>
    </subcellularLocation>
    <subcellularLocation>
        <location evidence="3">Mitochondrion outer membrane</location>
        <topology evidence="3">Peripheral membrane protein</topology>
        <orientation evidence="3">Cytoplasmic side</orientation>
    </subcellularLocation>
</comment>
<comment type="tissue specificity">
    <text>Ubiquitous.</text>
</comment>
<comment type="similarity">
    <text evidence="8">Belongs to the Tom34 family.</text>
</comment>
<reference key="1">
    <citation type="journal article" date="1997" name="DNA Cell Biol.">
        <title>hTom34: a novel translocase for the import of proteins into human mitochondria.</title>
        <authorList>
            <person name="Nuttall S.D."/>
            <person name="Hanson B.J."/>
            <person name="Mori M."/>
            <person name="Hoogenraad N.J."/>
        </authorList>
    </citation>
    <scope>NUCLEOTIDE SEQUENCE [MRNA]</scope>
    <scope>FUNCTION</scope>
</reference>
<reference key="2">
    <citation type="journal article" date="2006" name="Int. J. Oncol.">
        <title>Identification of TOMM34, which shows elevated expression in the majority of human colon cancers, as a novel drug target.</title>
        <authorList>
            <person name="Shimokawa T."/>
            <person name="Matsushima S."/>
            <person name="Tsunoda T."/>
            <person name="Tahara H."/>
            <person name="Nakamura Y."/>
            <person name="Furukawa Y."/>
        </authorList>
    </citation>
    <scope>NUCLEOTIDE SEQUENCE [MRNA]</scope>
</reference>
<reference key="3">
    <citation type="submission" date="2004-10" db="EMBL/GenBank/DDBJ databases">
        <title>Cloning of human full-length CDSs in BD Creator(TM) system donor vector.</title>
        <authorList>
            <person name="Kalnine N."/>
            <person name="Chen X."/>
            <person name="Rolfs A."/>
            <person name="Halleck A."/>
            <person name="Hines L."/>
            <person name="Eisenstein S."/>
            <person name="Koundinya M."/>
            <person name="Raphael J."/>
            <person name="Moreira D."/>
            <person name="Kelley T."/>
            <person name="LaBaer J."/>
            <person name="Lin Y."/>
            <person name="Phelan M."/>
            <person name="Farmer A."/>
        </authorList>
    </citation>
    <scope>NUCLEOTIDE SEQUENCE [LARGE SCALE MRNA]</scope>
</reference>
<reference key="4">
    <citation type="submission" date="2004-06" db="EMBL/GenBank/DDBJ databases">
        <title>Cloning of human full open reading frames in Gateway(TM) system entry vector (pDONR201).</title>
        <authorList>
            <person name="Ebert L."/>
            <person name="Schick M."/>
            <person name="Neubert P."/>
            <person name="Schatten R."/>
            <person name="Henze S."/>
            <person name="Korn B."/>
        </authorList>
    </citation>
    <scope>NUCLEOTIDE SEQUENCE [LARGE SCALE MRNA]</scope>
</reference>
<reference key="5">
    <citation type="submission" date="2005-04" db="EMBL/GenBank/DDBJ databases">
        <authorList>
            <person name="Suzuki Y."/>
            <person name="Sugano S."/>
            <person name="Totoki Y."/>
            <person name="Toyoda A."/>
            <person name="Takeda T."/>
            <person name="Sakaki Y."/>
            <person name="Tanaka A."/>
            <person name="Yokoyama S."/>
        </authorList>
    </citation>
    <scope>NUCLEOTIDE SEQUENCE [LARGE SCALE MRNA]</scope>
    <source>
        <tissue>Kidney</tissue>
    </source>
</reference>
<reference key="6">
    <citation type="journal article" date="2001" name="Nature">
        <title>The DNA sequence and comparative analysis of human chromosome 20.</title>
        <authorList>
            <person name="Deloukas P."/>
            <person name="Matthews L.H."/>
            <person name="Ashurst J.L."/>
            <person name="Burton J."/>
            <person name="Gilbert J.G.R."/>
            <person name="Jones M."/>
            <person name="Stavrides G."/>
            <person name="Almeida J.P."/>
            <person name="Babbage A.K."/>
            <person name="Bagguley C.L."/>
            <person name="Bailey J."/>
            <person name="Barlow K.F."/>
            <person name="Bates K.N."/>
            <person name="Beard L.M."/>
            <person name="Beare D.M."/>
            <person name="Beasley O.P."/>
            <person name="Bird C.P."/>
            <person name="Blakey S.E."/>
            <person name="Bridgeman A.M."/>
            <person name="Brown A.J."/>
            <person name="Buck D."/>
            <person name="Burrill W.D."/>
            <person name="Butler A.P."/>
            <person name="Carder C."/>
            <person name="Carter N.P."/>
            <person name="Chapman J.C."/>
            <person name="Clamp M."/>
            <person name="Clark G."/>
            <person name="Clark L.N."/>
            <person name="Clark S.Y."/>
            <person name="Clee C.M."/>
            <person name="Clegg S."/>
            <person name="Cobley V.E."/>
            <person name="Collier R.E."/>
            <person name="Connor R.E."/>
            <person name="Corby N.R."/>
            <person name="Coulson A."/>
            <person name="Coville G.J."/>
            <person name="Deadman R."/>
            <person name="Dhami P.D."/>
            <person name="Dunn M."/>
            <person name="Ellington A.G."/>
            <person name="Frankland J.A."/>
            <person name="Fraser A."/>
            <person name="French L."/>
            <person name="Garner P."/>
            <person name="Grafham D.V."/>
            <person name="Griffiths C."/>
            <person name="Griffiths M.N.D."/>
            <person name="Gwilliam R."/>
            <person name="Hall R.E."/>
            <person name="Hammond S."/>
            <person name="Harley J.L."/>
            <person name="Heath P.D."/>
            <person name="Ho S."/>
            <person name="Holden J.L."/>
            <person name="Howden P.J."/>
            <person name="Huckle E."/>
            <person name="Hunt A.R."/>
            <person name="Hunt S.E."/>
            <person name="Jekosch K."/>
            <person name="Johnson C.M."/>
            <person name="Johnson D."/>
            <person name="Kay M.P."/>
            <person name="Kimberley A.M."/>
            <person name="King A."/>
            <person name="Knights A."/>
            <person name="Laird G.K."/>
            <person name="Lawlor S."/>
            <person name="Lehvaeslaiho M.H."/>
            <person name="Leversha M.A."/>
            <person name="Lloyd C."/>
            <person name="Lloyd D.M."/>
            <person name="Lovell J.D."/>
            <person name="Marsh V.L."/>
            <person name="Martin S.L."/>
            <person name="McConnachie L.J."/>
            <person name="McLay K."/>
            <person name="McMurray A.A."/>
            <person name="Milne S.A."/>
            <person name="Mistry D."/>
            <person name="Moore M.J.F."/>
            <person name="Mullikin J.C."/>
            <person name="Nickerson T."/>
            <person name="Oliver K."/>
            <person name="Parker A."/>
            <person name="Patel R."/>
            <person name="Pearce T.A.V."/>
            <person name="Peck A.I."/>
            <person name="Phillimore B.J.C.T."/>
            <person name="Prathalingam S.R."/>
            <person name="Plumb R.W."/>
            <person name="Ramsay H."/>
            <person name="Rice C.M."/>
            <person name="Ross M.T."/>
            <person name="Scott C.E."/>
            <person name="Sehra H.K."/>
            <person name="Shownkeen R."/>
            <person name="Sims S."/>
            <person name="Skuce C.D."/>
            <person name="Smith M.L."/>
            <person name="Soderlund C."/>
            <person name="Steward C.A."/>
            <person name="Sulston J.E."/>
            <person name="Swann R.M."/>
            <person name="Sycamore N."/>
            <person name="Taylor R."/>
            <person name="Tee L."/>
            <person name="Thomas D.W."/>
            <person name="Thorpe A."/>
            <person name="Tracey A."/>
            <person name="Tromans A.C."/>
            <person name="Vaudin M."/>
            <person name="Wall M."/>
            <person name="Wallis J.M."/>
            <person name="Whitehead S.L."/>
            <person name="Whittaker P."/>
            <person name="Willey D.L."/>
            <person name="Williams L."/>
            <person name="Williams S.A."/>
            <person name="Wilming L."/>
            <person name="Wray P.W."/>
            <person name="Hubbard T."/>
            <person name="Durbin R.M."/>
            <person name="Bentley D.R."/>
            <person name="Beck S."/>
            <person name="Rogers J."/>
        </authorList>
    </citation>
    <scope>NUCLEOTIDE SEQUENCE [LARGE SCALE GENOMIC DNA]</scope>
</reference>
<reference key="7">
    <citation type="submission" date="2005-09" db="EMBL/GenBank/DDBJ databases">
        <authorList>
            <person name="Mural R.J."/>
            <person name="Istrail S."/>
            <person name="Sutton G.G."/>
            <person name="Florea L."/>
            <person name="Halpern A.L."/>
            <person name="Mobarry C.M."/>
            <person name="Lippert R."/>
            <person name="Walenz B."/>
            <person name="Shatkay H."/>
            <person name="Dew I."/>
            <person name="Miller J.R."/>
            <person name="Flanigan M.J."/>
            <person name="Edwards N.J."/>
            <person name="Bolanos R."/>
            <person name="Fasulo D."/>
            <person name="Halldorsson B.V."/>
            <person name="Hannenhalli S."/>
            <person name="Turner R."/>
            <person name="Yooseph S."/>
            <person name="Lu F."/>
            <person name="Nusskern D.R."/>
            <person name="Shue B.C."/>
            <person name="Zheng X.H."/>
            <person name="Zhong F."/>
            <person name="Delcher A.L."/>
            <person name="Huson D.H."/>
            <person name="Kravitz S.A."/>
            <person name="Mouchard L."/>
            <person name="Reinert K."/>
            <person name="Remington K.A."/>
            <person name="Clark A.G."/>
            <person name="Waterman M.S."/>
            <person name="Eichler E.E."/>
            <person name="Adams M.D."/>
            <person name="Hunkapiller M.W."/>
            <person name="Myers E.W."/>
            <person name="Venter J.C."/>
        </authorList>
    </citation>
    <scope>NUCLEOTIDE SEQUENCE [LARGE SCALE GENOMIC DNA]</scope>
</reference>
<reference key="8">
    <citation type="journal article" date="2004" name="Genome Res.">
        <title>The status, quality, and expansion of the NIH full-length cDNA project: the Mammalian Gene Collection (MGC).</title>
        <authorList>
            <consortium name="The MGC Project Team"/>
        </authorList>
    </citation>
    <scope>NUCLEOTIDE SEQUENCE [LARGE SCALE MRNA]</scope>
    <source>
        <tissue>Muscle</tissue>
        <tissue>Skin</tissue>
    </source>
</reference>
<reference key="9">
    <citation type="journal article" date="1998" name="J. Biol. Chem.">
        <title>Specific binding of tetratricopeptide repeat proteins to the C-terminal 12-kDa domain of hsp90.</title>
        <authorList>
            <person name="Young J.C."/>
            <person name="Obermann W.M."/>
            <person name="Hartl F.U."/>
        </authorList>
    </citation>
    <scope>INTERACTION WITH HSP90A</scope>
</reference>
<reference key="10">
    <citation type="journal article" date="1999" name="J. Biochem.">
        <title>Characterization of the novel mitochondrial protein import component, Tom34, in mammalian cells.</title>
        <authorList>
            <person name="Chewawiwat N."/>
            <person name="Yano M."/>
            <person name="Terada K."/>
            <person name="Hoogenraad N.J."/>
            <person name="Mori M."/>
        </authorList>
    </citation>
    <scope>FUNCTION</scope>
    <scope>SUBCELLULAR LOCATION</scope>
</reference>
<reference key="11">
    <citation type="journal article" date="2002" name="Arch. Biochem. Biophys.">
        <title>Tom34 unlike Tom20 does not interact with the leader sequences of mitochondrial precursor proteins.</title>
        <authorList>
            <person name="Mukhopadhyay A."/>
            <person name="Avramova L.V."/>
            <person name="Weiner H."/>
        </authorList>
    </citation>
    <scope>FUNCTION</scope>
</reference>
<reference key="12">
    <citation type="journal article" date="2002" name="Arch. Biochem. Biophys.">
        <title>Yeast two-hybrid screening identifies binding partners of human Tom34 that have ATPase activity and form a complex with Tom34 in the cytosol.</title>
        <authorList>
            <person name="Yang C.-S."/>
            <person name="Weiner H."/>
        </authorList>
    </citation>
    <scope>INTERACTION WITH VCP; ATP6V1D; KIAA0665; AMPK AND DMAP1</scope>
</reference>
<reference key="13">
    <citation type="journal article" date="2006" name="Cell">
        <title>Global, in vivo, and site-specific phosphorylation dynamics in signaling networks.</title>
        <authorList>
            <person name="Olsen J.V."/>
            <person name="Blagoev B."/>
            <person name="Gnad F."/>
            <person name="Macek B."/>
            <person name="Kumar C."/>
            <person name="Mortensen P."/>
            <person name="Mann M."/>
        </authorList>
    </citation>
    <scope>PHOSPHORYLATION [LARGE SCALE ANALYSIS] AT SER-186</scope>
    <scope>IDENTIFICATION BY MASS SPECTROMETRY [LARGE SCALE ANALYSIS]</scope>
    <source>
        <tissue>Cervix carcinoma</tissue>
    </source>
</reference>
<reference key="14">
    <citation type="journal article" date="2010" name="Sci. Signal.">
        <title>Quantitative phosphoproteomics reveals widespread full phosphorylation site occupancy during mitosis.</title>
        <authorList>
            <person name="Olsen J.V."/>
            <person name="Vermeulen M."/>
            <person name="Santamaria A."/>
            <person name="Kumar C."/>
            <person name="Miller M.L."/>
            <person name="Jensen L.J."/>
            <person name="Gnad F."/>
            <person name="Cox J."/>
            <person name="Jensen T.S."/>
            <person name="Nigg E.A."/>
            <person name="Brunak S."/>
            <person name="Mann M."/>
        </authorList>
    </citation>
    <scope>PHOSPHORYLATION [LARGE SCALE ANALYSIS] AT SER-186</scope>
    <scope>IDENTIFICATION BY MASS SPECTROMETRY [LARGE SCALE ANALYSIS]</scope>
    <source>
        <tissue>Cervix carcinoma</tissue>
    </source>
</reference>
<reference key="15">
    <citation type="journal article" date="2011" name="BMC Syst. Biol.">
        <title>Initial characterization of the human central proteome.</title>
        <authorList>
            <person name="Burkard T.R."/>
            <person name="Planyavsky M."/>
            <person name="Kaupe I."/>
            <person name="Breitwieser F.P."/>
            <person name="Buerckstuemmer T."/>
            <person name="Bennett K.L."/>
            <person name="Superti-Furga G."/>
            <person name="Colinge J."/>
        </authorList>
    </citation>
    <scope>IDENTIFICATION BY MASS SPECTROMETRY [LARGE SCALE ANALYSIS]</scope>
</reference>
<reference key="16">
    <citation type="journal article" date="2011" name="Sci. Signal.">
        <title>System-wide temporal characterization of the proteome and phosphoproteome of human embryonic stem cell differentiation.</title>
        <authorList>
            <person name="Rigbolt K.T."/>
            <person name="Prokhorova T.A."/>
            <person name="Akimov V."/>
            <person name="Henningsen J."/>
            <person name="Johansen P.T."/>
            <person name="Kratchmarova I."/>
            <person name="Kassem M."/>
            <person name="Mann M."/>
            <person name="Olsen J.V."/>
            <person name="Blagoev B."/>
        </authorList>
    </citation>
    <scope>PHOSPHORYLATION [LARGE SCALE ANALYSIS] AT SER-186</scope>
    <scope>IDENTIFICATION BY MASS SPECTROMETRY [LARGE SCALE ANALYSIS]</scope>
</reference>
<reference key="17">
    <citation type="journal article" date="2012" name="Proc. Natl. Acad. Sci. U.S.A.">
        <title>N-terminal acetylome analyses and functional insights of the N-terminal acetyltransferase NatB.</title>
        <authorList>
            <person name="Van Damme P."/>
            <person name="Lasa M."/>
            <person name="Polevoda B."/>
            <person name="Gazquez C."/>
            <person name="Elosegui-Artola A."/>
            <person name="Kim D.S."/>
            <person name="De Juan-Pardo E."/>
            <person name="Demeyer K."/>
            <person name="Hole K."/>
            <person name="Larrea E."/>
            <person name="Timmerman E."/>
            <person name="Prieto J."/>
            <person name="Arnesen T."/>
            <person name="Sherman F."/>
            <person name="Gevaert K."/>
            <person name="Aldabe R."/>
        </authorList>
    </citation>
    <scope>IDENTIFICATION BY MASS SPECTROMETRY [LARGE SCALE ANALYSIS]</scope>
</reference>
<reference key="18">
    <citation type="journal article" date="2013" name="J. Proteome Res.">
        <title>Toward a comprehensive characterization of a human cancer cell phosphoproteome.</title>
        <authorList>
            <person name="Zhou H."/>
            <person name="Di Palma S."/>
            <person name="Preisinger C."/>
            <person name="Peng M."/>
            <person name="Polat A.N."/>
            <person name="Heck A.J."/>
            <person name="Mohammed S."/>
        </authorList>
    </citation>
    <scope>PHOSPHORYLATION [LARGE SCALE ANALYSIS] AT SER-160 AND SER-186</scope>
    <scope>IDENTIFICATION BY MASS SPECTROMETRY [LARGE SCALE ANALYSIS]</scope>
    <source>
        <tissue>Cervix carcinoma</tissue>
        <tissue>Erythroleukemia</tissue>
    </source>
</reference>
<reference key="19">
    <citation type="journal article" date="2014" name="J. Proteomics">
        <title>An enzyme assisted RP-RPLC approach for in-depth analysis of human liver phosphoproteome.</title>
        <authorList>
            <person name="Bian Y."/>
            <person name="Song C."/>
            <person name="Cheng K."/>
            <person name="Dong M."/>
            <person name="Wang F."/>
            <person name="Huang J."/>
            <person name="Sun D."/>
            <person name="Wang L."/>
            <person name="Ye M."/>
            <person name="Zou H."/>
        </authorList>
    </citation>
    <scope>IDENTIFICATION BY MASS SPECTROMETRY [LARGE SCALE ANALYSIS]</scope>
    <source>
        <tissue>Liver</tissue>
    </source>
</reference>
<reference key="20">
    <citation type="journal article" date="2015" name="Proteomics">
        <title>N-terminome analysis of the human mitochondrial proteome.</title>
        <authorList>
            <person name="Vaca Jacome A.S."/>
            <person name="Rabilloud T."/>
            <person name="Schaeffer-Reiss C."/>
            <person name="Rompais M."/>
            <person name="Ayoub D."/>
            <person name="Lane L."/>
            <person name="Bairoch A."/>
            <person name="Van Dorsselaer A."/>
            <person name="Carapito C."/>
        </authorList>
    </citation>
    <scope>IDENTIFICATION BY MASS SPECTROMETRY [LARGE SCALE ANALYSIS]</scope>
</reference>
<reference key="21">
    <citation type="journal article" date="2017" name="Nat. Struct. Mol. Biol.">
        <title>Site-specific mapping of the human SUMO proteome reveals co-modification with phosphorylation.</title>
        <authorList>
            <person name="Hendriks I.A."/>
            <person name="Lyon D."/>
            <person name="Young C."/>
            <person name="Jensen L.J."/>
            <person name="Vertegaal A.C."/>
            <person name="Nielsen M.L."/>
        </authorList>
    </citation>
    <scope>SUMOYLATION [LARGE SCALE ANALYSIS] AT LYS-197</scope>
    <scope>IDENTIFICATION BY MASS SPECTROMETRY [LARGE SCALE ANALYSIS]</scope>
</reference>
<gene>
    <name type="primary">TOMM34</name>
    <name type="synonym">URCC3</name>
</gene>
<sequence>MAPKFPDSVEELRAAGNESFRNGQYAEASALYGRALRVLQAQGSSDPEEESVLYSNRAACHLKDGNCRDCIKDCTSALALVPFSIKPLLRRASAYEALEKYPMAYVDYKTVLQIDDNVTSAVEGINRMTRALMDSLGPEWRLKLPSIPLVPVSAQKRWNSLPSENHKEMAKSKSKETTATKNRVPSAGDVEKARVLKEEGNELVKKGNHKKAIEKYSESLLCSNLESATYSNRALCYLVLKQYTEAVKDCTEALKLDGKNVKAFYRRAQAHKALKDYKSSFADISNLLQIEPRNGPAQKLRQEVKQNLH</sequence>
<name>TOM34_HUMAN</name>